<gene>
    <name evidence="1" type="primary">sfsA</name>
    <name type="synonym">sfs1</name>
    <name type="ordered locus">R01726</name>
    <name type="ORF">SMc00297</name>
</gene>
<evidence type="ECO:0000255" key="1">
    <source>
        <dbReference type="HAMAP-Rule" id="MF_00095"/>
    </source>
</evidence>
<name>SFSA_RHIME</name>
<dbReference type="EMBL" id="AL591688">
    <property type="protein sequence ID" value="CAC46305.1"/>
    <property type="molecule type" value="Genomic_DNA"/>
</dbReference>
<dbReference type="EMBL" id="AF031938">
    <property type="protein sequence ID" value="AAC61901.1"/>
    <property type="molecule type" value="Genomic_DNA"/>
</dbReference>
<dbReference type="RefSeq" id="NP_385832.1">
    <property type="nucleotide sequence ID" value="NC_003047.1"/>
</dbReference>
<dbReference type="RefSeq" id="WP_010969426.1">
    <property type="nucleotide sequence ID" value="NC_003047.1"/>
</dbReference>
<dbReference type="SMR" id="O87322"/>
<dbReference type="DNASU" id="1233391"/>
<dbReference type="EnsemblBacteria" id="CAC46305">
    <property type="protein sequence ID" value="CAC46305"/>
    <property type="gene ID" value="SMc00297"/>
</dbReference>
<dbReference type="KEGG" id="sme:SMc00297"/>
<dbReference type="PATRIC" id="fig|266834.11.peg.3164"/>
<dbReference type="eggNOG" id="COG1489">
    <property type="taxonomic scope" value="Bacteria"/>
</dbReference>
<dbReference type="HOGENOM" id="CLU_052299_2_0_5"/>
<dbReference type="OrthoDB" id="9802365at2"/>
<dbReference type="Proteomes" id="UP000001976">
    <property type="component" value="Chromosome"/>
</dbReference>
<dbReference type="GO" id="GO:0003677">
    <property type="term" value="F:DNA binding"/>
    <property type="evidence" value="ECO:0007669"/>
    <property type="project" value="InterPro"/>
</dbReference>
<dbReference type="CDD" id="cd22359">
    <property type="entry name" value="SfsA-like_bacterial"/>
    <property type="match status" value="1"/>
</dbReference>
<dbReference type="Gene3D" id="2.40.50.580">
    <property type="match status" value="1"/>
</dbReference>
<dbReference type="Gene3D" id="3.40.1350.60">
    <property type="match status" value="1"/>
</dbReference>
<dbReference type="HAMAP" id="MF_00095">
    <property type="entry name" value="SfsA"/>
    <property type="match status" value="1"/>
</dbReference>
<dbReference type="InterPro" id="IPR005224">
    <property type="entry name" value="SfsA"/>
</dbReference>
<dbReference type="InterPro" id="IPR040452">
    <property type="entry name" value="SfsA_C"/>
</dbReference>
<dbReference type="InterPro" id="IPR041465">
    <property type="entry name" value="SfsA_N"/>
</dbReference>
<dbReference type="NCBIfam" id="TIGR00230">
    <property type="entry name" value="sfsA"/>
    <property type="match status" value="1"/>
</dbReference>
<dbReference type="PANTHER" id="PTHR30545">
    <property type="entry name" value="SUGAR FERMENTATION STIMULATION PROTEIN A"/>
    <property type="match status" value="1"/>
</dbReference>
<dbReference type="PANTHER" id="PTHR30545:SF2">
    <property type="entry name" value="SUGAR FERMENTATION STIMULATION PROTEIN A"/>
    <property type="match status" value="1"/>
</dbReference>
<dbReference type="Pfam" id="PF03749">
    <property type="entry name" value="SfsA"/>
    <property type="match status" value="1"/>
</dbReference>
<dbReference type="Pfam" id="PF17746">
    <property type="entry name" value="SfsA_N"/>
    <property type="match status" value="1"/>
</dbReference>
<keyword id="KW-1185">Reference proteome</keyword>
<feature type="chain" id="PRO_0000152301" description="Sugar fermentation stimulation protein homolog">
    <location>
        <begin position="1"/>
        <end position="239"/>
    </location>
</feature>
<proteinExistence type="inferred from homology"/>
<accession>O87322</accession>
<reference key="1">
    <citation type="journal article" date="2001" name="Proc. Natl. Acad. Sci. U.S.A.">
        <title>Analysis of the chromosome sequence of the legume symbiont Sinorhizobium meliloti strain 1021.</title>
        <authorList>
            <person name="Capela D."/>
            <person name="Barloy-Hubler F."/>
            <person name="Gouzy J."/>
            <person name="Bothe G."/>
            <person name="Ampe F."/>
            <person name="Batut J."/>
            <person name="Boistard P."/>
            <person name="Becker A."/>
            <person name="Boutry M."/>
            <person name="Cadieu E."/>
            <person name="Dreano S."/>
            <person name="Gloux S."/>
            <person name="Godrie T."/>
            <person name="Goffeau A."/>
            <person name="Kahn D."/>
            <person name="Kiss E."/>
            <person name="Lelaure V."/>
            <person name="Masuy D."/>
            <person name="Pohl T."/>
            <person name="Portetelle D."/>
            <person name="Puehler A."/>
            <person name="Purnelle B."/>
            <person name="Ramsperger U."/>
            <person name="Renard C."/>
            <person name="Thebault P."/>
            <person name="Vandenbol M."/>
            <person name="Weidner S."/>
            <person name="Galibert F."/>
        </authorList>
    </citation>
    <scope>NUCLEOTIDE SEQUENCE [LARGE SCALE GENOMIC DNA]</scope>
    <source>
        <strain>1021</strain>
    </source>
</reference>
<reference key="2">
    <citation type="journal article" date="2001" name="Science">
        <title>The composite genome of the legume symbiont Sinorhizobium meliloti.</title>
        <authorList>
            <person name="Galibert F."/>
            <person name="Finan T.M."/>
            <person name="Long S.R."/>
            <person name="Puehler A."/>
            <person name="Abola P."/>
            <person name="Ampe F."/>
            <person name="Barloy-Hubler F."/>
            <person name="Barnett M.J."/>
            <person name="Becker A."/>
            <person name="Boistard P."/>
            <person name="Bothe G."/>
            <person name="Boutry M."/>
            <person name="Bowser L."/>
            <person name="Buhrmester J."/>
            <person name="Cadieu E."/>
            <person name="Capela D."/>
            <person name="Chain P."/>
            <person name="Cowie A."/>
            <person name="Davis R.W."/>
            <person name="Dreano S."/>
            <person name="Federspiel N.A."/>
            <person name="Fisher R.F."/>
            <person name="Gloux S."/>
            <person name="Godrie T."/>
            <person name="Goffeau A."/>
            <person name="Golding B."/>
            <person name="Gouzy J."/>
            <person name="Gurjal M."/>
            <person name="Hernandez-Lucas I."/>
            <person name="Hong A."/>
            <person name="Huizar L."/>
            <person name="Hyman R.W."/>
            <person name="Jones T."/>
            <person name="Kahn D."/>
            <person name="Kahn M.L."/>
            <person name="Kalman S."/>
            <person name="Keating D.H."/>
            <person name="Kiss E."/>
            <person name="Komp C."/>
            <person name="Lelaure V."/>
            <person name="Masuy D."/>
            <person name="Palm C."/>
            <person name="Peck M.C."/>
            <person name="Pohl T.M."/>
            <person name="Portetelle D."/>
            <person name="Purnelle B."/>
            <person name="Ramsperger U."/>
            <person name="Surzycki R."/>
            <person name="Thebault P."/>
            <person name="Vandenbol M."/>
            <person name="Vorhoelter F.J."/>
            <person name="Weidner S."/>
            <person name="Wells D.H."/>
            <person name="Wong K."/>
            <person name="Yeh K.-C."/>
            <person name="Batut J."/>
        </authorList>
    </citation>
    <scope>NUCLEOTIDE SEQUENCE [LARGE SCALE GENOMIC DNA]</scope>
    <source>
        <strain>1021</strain>
    </source>
</reference>
<reference key="3">
    <citation type="journal article" date="1998" name="Can. J. Microbiol.">
        <title>The phbC (poly-beta-hydroxybutyrate synthase) gene of Rhizobium (Sinorhizobium) meliloti and characterization of phbC mutants.</title>
        <authorList>
            <person name="Willis L.B."/>
            <person name="Walker G.C."/>
        </authorList>
    </citation>
    <scope>NUCLEOTIDE SEQUENCE [GENOMIC DNA] OF 1-148</scope>
    <source>
        <strain>1021</strain>
    </source>
</reference>
<sequence>MNFPRPLVPATLVQRYKRFLFDAILADGTAITGSCPNTGSMRGLTIPGSPIWLSEHDSPTRKYRHMLEIVEADGTLVGINTGLPNRIAEEAIMAGQVGNLHTYGTLRREQRYGRNSRIDILLSDAEKGLAYVEVKNVHFSRVRGLAEFPDSPTQRGAKHLEELGDMVEAGHRAIMLYLIQRGDCSRFRICRELDPVYARAFERASARGVEAYAVKCAVSPGQIVAAGPIVVDEPVPAVL</sequence>
<protein>
    <recommendedName>
        <fullName evidence="1">Sugar fermentation stimulation protein homolog</fullName>
    </recommendedName>
</protein>
<organism>
    <name type="scientific">Rhizobium meliloti (strain 1021)</name>
    <name type="common">Ensifer meliloti</name>
    <name type="synonym">Sinorhizobium meliloti</name>
    <dbReference type="NCBI Taxonomy" id="266834"/>
    <lineage>
        <taxon>Bacteria</taxon>
        <taxon>Pseudomonadati</taxon>
        <taxon>Pseudomonadota</taxon>
        <taxon>Alphaproteobacteria</taxon>
        <taxon>Hyphomicrobiales</taxon>
        <taxon>Rhizobiaceae</taxon>
        <taxon>Sinorhizobium/Ensifer group</taxon>
        <taxon>Sinorhizobium</taxon>
    </lineage>
</organism>
<comment type="similarity">
    <text evidence="1">Belongs to the SfsA family.</text>
</comment>